<organism>
    <name type="scientific">Sinorhizobium fredii (strain NBRC 101917 / NGR234)</name>
    <dbReference type="NCBI Taxonomy" id="394"/>
    <lineage>
        <taxon>Bacteria</taxon>
        <taxon>Pseudomonadati</taxon>
        <taxon>Pseudomonadota</taxon>
        <taxon>Alphaproteobacteria</taxon>
        <taxon>Hyphomicrobiales</taxon>
        <taxon>Rhizobiaceae</taxon>
        <taxon>Sinorhizobium/Ensifer group</taxon>
        <taxon>Sinorhizobium</taxon>
    </lineage>
</organism>
<comment type="similarity">
    <text evidence="1">Belongs to the transposase 20 family.</text>
</comment>
<keyword id="KW-0233">DNA recombination</keyword>
<keyword id="KW-0238">DNA-binding</keyword>
<keyword id="KW-0614">Plasmid</keyword>
<keyword id="KW-1185">Reference proteome</keyword>
<keyword id="KW-0814">Transposable element</keyword>
<keyword id="KW-0815">Transposition</keyword>
<geneLocation type="plasmid">
    <name>sym pNGR234a</name>
</geneLocation>
<sequence>MLAANERPEAPTAIRIDLGAIFVSLELSRSKWLITSLSPGGGEKMSKHAVAADDIAGLLARFAELKRKARARTGRYFPTIVIQEAGLDGFWIHRVLQAEGIESHVVDPAPIPTSRRRRRAKTDKIDGETLVRALLAYKRGEPRVCAMLRVPTPEEEDRRRISRERKALTNERVRHVNRIKGLLFSQGVSGYQPLRRDRRTRLEELRTGDGRPLPTHLKAQVGRELDRLELLIGQIKAVEVERDAMLAAAPVGSAHFADCEQPAPAMLLALKGIGPEFAAVLWSEGLSRHFDNRRQVAAYAGLAPTPWQSGSVDHDQGVSKAGNPRLRTTLIQGAWLWLRHQPHSALSLWFKQRGKQNDGRLKKKKTIVALACKLLVALWKYVNAGVVIEGAVMKTP</sequence>
<accession>P55643</accession>
<name>Y4RJ_SINFN</name>
<dbReference type="EMBL" id="U00090">
    <property type="protein sequence ID" value="AAB91835.1"/>
    <property type="molecule type" value="Genomic_DNA"/>
</dbReference>
<dbReference type="RefSeq" id="NP_444048.1">
    <property type="nucleotide sequence ID" value="NC_000914.2"/>
</dbReference>
<dbReference type="RefSeq" id="WP_010875212.1">
    <property type="nucleotide sequence ID" value="NC_000914.2"/>
</dbReference>
<dbReference type="SMR" id="P55643"/>
<dbReference type="KEGG" id="rhi:NGR_a01770"/>
<dbReference type="PATRIC" id="fig|394.7.peg.172"/>
<dbReference type="eggNOG" id="COG3547">
    <property type="taxonomic scope" value="Bacteria"/>
</dbReference>
<dbReference type="HOGENOM" id="CLU_037737_1_0_5"/>
<dbReference type="OrthoDB" id="7459855at2"/>
<dbReference type="Proteomes" id="UP000001054">
    <property type="component" value="Plasmid pNGR234a"/>
</dbReference>
<dbReference type="GO" id="GO:0003677">
    <property type="term" value="F:DNA binding"/>
    <property type="evidence" value="ECO:0007669"/>
    <property type="project" value="UniProtKB-KW"/>
</dbReference>
<dbReference type="GO" id="GO:0004803">
    <property type="term" value="F:transposase activity"/>
    <property type="evidence" value="ECO:0007669"/>
    <property type="project" value="InterPro"/>
</dbReference>
<dbReference type="GO" id="GO:0006313">
    <property type="term" value="P:DNA transposition"/>
    <property type="evidence" value="ECO:0007669"/>
    <property type="project" value="InterPro"/>
</dbReference>
<dbReference type="InterPro" id="IPR002525">
    <property type="entry name" value="Transp_IS110-like_N"/>
</dbReference>
<dbReference type="InterPro" id="IPR047650">
    <property type="entry name" value="Transpos_IS110"/>
</dbReference>
<dbReference type="InterPro" id="IPR003346">
    <property type="entry name" value="Transposase_20"/>
</dbReference>
<dbReference type="NCBIfam" id="NF033542">
    <property type="entry name" value="transpos_IS110"/>
    <property type="match status" value="1"/>
</dbReference>
<dbReference type="PANTHER" id="PTHR33055:SF3">
    <property type="entry name" value="PUTATIVE TRANSPOSASE FOR IS117-RELATED"/>
    <property type="match status" value="1"/>
</dbReference>
<dbReference type="PANTHER" id="PTHR33055">
    <property type="entry name" value="TRANSPOSASE FOR INSERTION SEQUENCE ELEMENT IS1111A"/>
    <property type="match status" value="1"/>
</dbReference>
<dbReference type="Pfam" id="PF01548">
    <property type="entry name" value="DEDD_Tnp_IS110"/>
    <property type="match status" value="1"/>
</dbReference>
<dbReference type="Pfam" id="PF02371">
    <property type="entry name" value="Transposase_20"/>
    <property type="match status" value="1"/>
</dbReference>
<protein>
    <recommendedName>
        <fullName>Putative transposase y4rJ</fullName>
    </recommendedName>
</protein>
<feature type="chain" id="PRO_0000075457" description="Putative transposase y4rJ">
    <location>
        <begin position="1"/>
        <end position="396"/>
    </location>
</feature>
<proteinExistence type="inferred from homology"/>
<reference key="1">
    <citation type="journal article" date="1997" name="Nature">
        <title>Molecular basis of symbiosis between Rhizobium and legumes.</title>
        <authorList>
            <person name="Freiberg C.A."/>
            <person name="Fellay R."/>
            <person name="Bairoch A."/>
            <person name="Broughton W.J."/>
            <person name="Rosenthal A."/>
            <person name="Perret X."/>
        </authorList>
    </citation>
    <scope>NUCLEOTIDE SEQUENCE [LARGE SCALE GENOMIC DNA]</scope>
    <source>
        <strain>NBRC 101917 / NGR234</strain>
    </source>
</reference>
<reference key="2">
    <citation type="journal article" date="2009" name="Appl. Environ. Microbiol.">
        <title>Rhizobium sp. strain NGR234 possesses a remarkable number of secretion systems.</title>
        <authorList>
            <person name="Schmeisser C."/>
            <person name="Liesegang H."/>
            <person name="Krysciak D."/>
            <person name="Bakkou N."/>
            <person name="Le Quere A."/>
            <person name="Wollherr A."/>
            <person name="Heinemeyer I."/>
            <person name="Morgenstern B."/>
            <person name="Pommerening-Roeser A."/>
            <person name="Flores M."/>
            <person name="Palacios R."/>
            <person name="Brenner S."/>
            <person name="Gottschalk G."/>
            <person name="Schmitz R.A."/>
            <person name="Broughton W.J."/>
            <person name="Perret X."/>
            <person name="Strittmatter A.W."/>
            <person name="Streit W.R."/>
        </authorList>
    </citation>
    <scope>NUCLEOTIDE SEQUENCE [LARGE SCALE GENOMIC DNA]</scope>
    <source>
        <strain>NBRC 101917 / NGR234</strain>
    </source>
</reference>
<evidence type="ECO:0000305" key="1"/>
<gene>
    <name type="ordered locus">NGR_a01770</name>
    <name type="ORF">y4rJ</name>
</gene>